<accession>B1LCY9</accession>
<sequence length="240" mass="27509">MNESERKIVEEFQKKTGINFKNEELLFRALCHSSYANEQNQAGRKNVESNEKLEFLGDAVLELFVCEILYKKYPEAEVGDLARVKSAAASEEVLALVSRKMNLGKFLFLGKGEEKTGGRDRDSILADAFEALLAAIYLDQGYEKIKELFEQEFEFYIEKIMKGEMLFDYKTALQEIVQSEHKVPPEYVLVRTEKNDGDRIFVVEVRVDGKTIATGRGRTKKEAEKEAARIAYEKLLKERA</sequence>
<evidence type="ECO:0000255" key="1">
    <source>
        <dbReference type="HAMAP-Rule" id="MF_00104"/>
    </source>
</evidence>
<keyword id="KW-0963">Cytoplasm</keyword>
<keyword id="KW-0255">Endonuclease</keyword>
<keyword id="KW-0378">Hydrolase</keyword>
<keyword id="KW-0460">Magnesium</keyword>
<keyword id="KW-0479">Metal-binding</keyword>
<keyword id="KW-0507">mRNA processing</keyword>
<keyword id="KW-0540">Nuclease</keyword>
<keyword id="KW-0694">RNA-binding</keyword>
<keyword id="KW-0698">rRNA processing</keyword>
<keyword id="KW-0699">rRNA-binding</keyword>
<keyword id="KW-0819">tRNA processing</keyword>
<comment type="function">
    <text evidence="1">Digests double-stranded RNA. Involved in the processing of primary rRNA transcript to yield the immediate precursors to the large and small rRNAs (23S and 16S). Processes some mRNAs, and tRNAs when they are encoded in the rRNA operon. Processes pre-crRNA and tracrRNA of type II CRISPR loci if present in the organism.</text>
</comment>
<comment type="catalytic activity">
    <reaction evidence="1">
        <text>Endonucleolytic cleavage to 5'-phosphomonoester.</text>
        <dbReference type="EC" id="3.1.26.3"/>
    </reaction>
</comment>
<comment type="cofactor">
    <cofactor evidence="1">
        <name>Mg(2+)</name>
        <dbReference type="ChEBI" id="CHEBI:18420"/>
    </cofactor>
</comment>
<comment type="subunit">
    <text evidence="1">Homodimer.</text>
</comment>
<comment type="subcellular location">
    <subcellularLocation>
        <location evidence="1">Cytoplasm</location>
    </subcellularLocation>
</comment>
<comment type="similarity">
    <text evidence="1">Belongs to the ribonuclease III family.</text>
</comment>
<gene>
    <name evidence="1" type="primary">rnc</name>
    <name type="ordered locus">TRQ2_1714</name>
</gene>
<proteinExistence type="inferred from homology"/>
<name>RNC_THESQ</name>
<dbReference type="EC" id="3.1.26.3" evidence="1"/>
<dbReference type="EMBL" id="CP000969">
    <property type="protein sequence ID" value="ACB10048.1"/>
    <property type="molecule type" value="Genomic_DNA"/>
</dbReference>
<dbReference type="RefSeq" id="WP_012311293.1">
    <property type="nucleotide sequence ID" value="NC_010483.1"/>
</dbReference>
<dbReference type="SMR" id="B1LCY9"/>
<dbReference type="KEGG" id="trq:TRQ2_1714"/>
<dbReference type="HOGENOM" id="CLU_000907_1_3_0"/>
<dbReference type="Proteomes" id="UP000001687">
    <property type="component" value="Chromosome"/>
</dbReference>
<dbReference type="GO" id="GO:0005737">
    <property type="term" value="C:cytoplasm"/>
    <property type="evidence" value="ECO:0007669"/>
    <property type="project" value="UniProtKB-SubCell"/>
</dbReference>
<dbReference type="GO" id="GO:0003725">
    <property type="term" value="F:double-stranded RNA binding"/>
    <property type="evidence" value="ECO:0007669"/>
    <property type="project" value="TreeGrafter"/>
</dbReference>
<dbReference type="GO" id="GO:0046872">
    <property type="term" value="F:metal ion binding"/>
    <property type="evidence" value="ECO:0007669"/>
    <property type="project" value="UniProtKB-KW"/>
</dbReference>
<dbReference type="GO" id="GO:0004525">
    <property type="term" value="F:ribonuclease III activity"/>
    <property type="evidence" value="ECO:0007669"/>
    <property type="project" value="UniProtKB-UniRule"/>
</dbReference>
<dbReference type="GO" id="GO:0019843">
    <property type="term" value="F:rRNA binding"/>
    <property type="evidence" value="ECO:0007669"/>
    <property type="project" value="UniProtKB-KW"/>
</dbReference>
<dbReference type="GO" id="GO:0006397">
    <property type="term" value="P:mRNA processing"/>
    <property type="evidence" value="ECO:0007669"/>
    <property type="project" value="UniProtKB-UniRule"/>
</dbReference>
<dbReference type="GO" id="GO:0010468">
    <property type="term" value="P:regulation of gene expression"/>
    <property type="evidence" value="ECO:0007669"/>
    <property type="project" value="TreeGrafter"/>
</dbReference>
<dbReference type="GO" id="GO:0006364">
    <property type="term" value="P:rRNA processing"/>
    <property type="evidence" value="ECO:0007669"/>
    <property type="project" value="UniProtKB-UniRule"/>
</dbReference>
<dbReference type="GO" id="GO:0008033">
    <property type="term" value="P:tRNA processing"/>
    <property type="evidence" value="ECO:0007669"/>
    <property type="project" value="UniProtKB-KW"/>
</dbReference>
<dbReference type="CDD" id="cd10845">
    <property type="entry name" value="DSRM_RNAse_III_family"/>
    <property type="match status" value="1"/>
</dbReference>
<dbReference type="CDD" id="cd00593">
    <property type="entry name" value="RIBOc"/>
    <property type="match status" value="1"/>
</dbReference>
<dbReference type="FunFam" id="1.10.1520.10:FF:000001">
    <property type="entry name" value="Ribonuclease 3"/>
    <property type="match status" value="1"/>
</dbReference>
<dbReference type="FunFam" id="3.30.160.20:FF:000003">
    <property type="entry name" value="Ribonuclease 3"/>
    <property type="match status" value="1"/>
</dbReference>
<dbReference type="Gene3D" id="3.30.160.20">
    <property type="match status" value="1"/>
</dbReference>
<dbReference type="Gene3D" id="1.10.1520.10">
    <property type="entry name" value="Ribonuclease III domain"/>
    <property type="match status" value="1"/>
</dbReference>
<dbReference type="HAMAP" id="MF_00104">
    <property type="entry name" value="RNase_III"/>
    <property type="match status" value="1"/>
</dbReference>
<dbReference type="InterPro" id="IPR014720">
    <property type="entry name" value="dsRBD_dom"/>
</dbReference>
<dbReference type="InterPro" id="IPR011907">
    <property type="entry name" value="RNase_III"/>
</dbReference>
<dbReference type="InterPro" id="IPR000999">
    <property type="entry name" value="RNase_III_dom"/>
</dbReference>
<dbReference type="InterPro" id="IPR036389">
    <property type="entry name" value="RNase_III_sf"/>
</dbReference>
<dbReference type="NCBIfam" id="TIGR02191">
    <property type="entry name" value="RNaseIII"/>
    <property type="match status" value="1"/>
</dbReference>
<dbReference type="PANTHER" id="PTHR11207:SF0">
    <property type="entry name" value="RIBONUCLEASE 3"/>
    <property type="match status" value="1"/>
</dbReference>
<dbReference type="PANTHER" id="PTHR11207">
    <property type="entry name" value="RIBONUCLEASE III"/>
    <property type="match status" value="1"/>
</dbReference>
<dbReference type="Pfam" id="PF00035">
    <property type="entry name" value="dsrm"/>
    <property type="match status" value="1"/>
</dbReference>
<dbReference type="Pfam" id="PF14622">
    <property type="entry name" value="Ribonucleas_3_3"/>
    <property type="match status" value="1"/>
</dbReference>
<dbReference type="SMART" id="SM00358">
    <property type="entry name" value="DSRM"/>
    <property type="match status" value="1"/>
</dbReference>
<dbReference type="SMART" id="SM00535">
    <property type="entry name" value="RIBOc"/>
    <property type="match status" value="1"/>
</dbReference>
<dbReference type="SUPFAM" id="SSF54768">
    <property type="entry name" value="dsRNA-binding domain-like"/>
    <property type="match status" value="1"/>
</dbReference>
<dbReference type="SUPFAM" id="SSF69065">
    <property type="entry name" value="RNase III domain-like"/>
    <property type="match status" value="1"/>
</dbReference>
<dbReference type="PROSITE" id="PS50137">
    <property type="entry name" value="DS_RBD"/>
    <property type="match status" value="1"/>
</dbReference>
<dbReference type="PROSITE" id="PS00517">
    <property type="entry name" value="RNASE_3_1"/>
    <property type="match status" value="1"/>
</dbReference>
<dbReference type="PROSITE" id="PS50142">
    <property type="entry name" value="RNASE_3_2"/>
    <property type="match status" value="1"/>
</dbReference>
<protein>
    <recommendedName>
        <fullName evidence="1">Ribonuclease 3</fullName>
        <ecNumber evidence="1">3.1.26.3</ecNumber>
    </recommendedName>
    <alternativeName>
        <fullName evidence="1">Ribonuclease III</fullName>
        <shortName evidence="1">RNase III</shortName>
    </alternativeName>
</protein>
<feature type="chain" id="PRO_1000094139" description="Ribonuclease 3">
    <location>
        <begin position="1"/>
        <end position="240"/>
    </location>
</feature>
<feature type="domain" description="RNase III" evidence="1">
    <location>
        <begin position="9"/>
        <end position="141"/>
    </location>
</feature>
<feature type="domain" description="DRBM" evidence="1">
    <location>
        <begin position="168"/>
        <end position="237"/>
    </location>
</feature>
<feature type="active site" evidence="1">
    <location>
        <position position="58"/>
    </location>
</feature>
<feature type="active site" evidence="1">
    <location>
        <position position="130"/>
    </location>
</feature>
<feature type="binding site" evidence="1">
    <location>
        <position position="54"/>
    </location>
    <ligand>
        <name>Mg(2+)</name>
        <dbReference type="ChEBI" id="CHEBI:18420"/>
    </ligand>
</feature>
<feature type="binding site" evidence="1">
    <location>
        <position position="127"/>
    </location>
    <ligand>
        <name>Mg(2+)</name>
        <dbReference type="ChEBI" id="CHEBI:18420"/>
    </ligand>
</feature>
<feature type="binding site" evidence="1">
    <location>
        <position position="130"/>
    </location>
    <ligand>
        <name>Mg(2+)</name>
        <dbReference type="ChEBI" id="CHEBI:18420"/>
    </ligand>
</feature>
<organism>
    <name type="scientific">Thermotoga sp. (strain RQ2)</name>
    <dbReference type="NCBI Taxonomy" id="126740"/>
    <lineage>
        <taxon>Bacteria</taxon>
        <taxon>Thermotogati</taxon>
        <taxon>Thermotogota</taxon>
        <taxon>Thermotogae</taxon>
        <taxon>Thermotogales</taxon>
        <taxon>Thermotogaceae</taxon>
        <taxon>Thermotoga</taxon>
    </lineage>
</organism>
<reference key="1">
    <citation type="journal article" date="2011" name="J. Bacteriol.">
        <title>Genome sequence of Thermotoga sp. strain RQ2, a hyperthermophilic bacterium isolated from a geothermally heated region of the seafloor near Ribeira Quente, the Azores.</title>
        <authorList>
            <person name="Swithers K.S."/>
            <person name="DiPippo J.L."/>
            <person name="Bruce D.C."/>
            <person name="Detter C."/>
            <person name="Tapia R."/>
            <person name="Han S."/>
            <person name="Saunders E."/>
            <person name="Goodwin L.A."/>
            <person name="Han J."/>
            <person name="Woyke T."/>
            <person name="Pitluck S."/>
            <person name="Pennacchio L."/>
            <person name="Nolan M."/>
            <person name="Mikhailova N."/>
            <person name="Lykidis A."/>
            <person name="Land M.L."/>
            <person name="Brettin T."/>
            <person name="Stetter K.O."/>
            <person name="Nelson K.E."/>
            <person name="Gogarten J.P."/>
            <person name="Noll K.M."/>
        </authorList>
    </citation>
    <scope>NUCLEOTIDE SEQUENCE [LARGE SCALE GENOMIC DNA]</scope>
    <source>
        <strain>RQ2</strain>
    </source>
</reference>